<reference key="1">
    <citation type="journal article" date="2006" name="Proc. Natl. Acad. Sci. U.S.A.">
        <title>Genomic analysis of the uncultivated marine crenarchaeote Cenarchaeum symbiosum.</title>
        <authorList>
            <person name="Hallam S.J."/>
            <person name="Konstantinidis K.T."/>
            <person name="Putnam N."/>
            <person name="Schleper C."/>
            <person name="Watanabe Y."/>
            <person name="Sugahara J."/>
            <person name="Preston C."/>
            <person name="de la Torre J."/>
            <person name="Richardson P.M."/>
            <person name="DeLong E.F."/>
        </authorList>
    </citation>
    <scope>NUCLEOTIDE SEQUENCE [LARGE SCALE GENOMIC DNA]</scope>
    <source>
        <strain>A</strain>
    </source>
</reference>
<organism>
    <name type="scientific">Cenarchaeum symbiosum (strain A)</name>
    <dbReference type="NCBI Taxonomy" id="414004"/>
    <lineage>
        <taxon>Archaea</taxon>
        <taxon>Nitrososphaerota</taxon>
        <taxon>Candidatus Cenarchaeales</taxon>
        <taxon>Candidatus Cenarchaeaceae</taxon>
        <taxon>Candidatus Cenarchaeum</taxon>
    </lineage>
</organism>
<name>AMPA_CENSY</name>
<comment type="function">
    <text evidence="1">Presumably involved in the processing and regular turnover of intracellular proteins. Catalyzes the removal of unsubstituted N-terminal amino acids from various peptides.</text>
</comment>
<comment type="catalytic activity">
    <reaction evidence="1">
        <text>Release of an N-terminal amino acid, Xaa-|-Yaa-, in which Xaa is preferably Leu, but may be other amino acids including Pro although not Arg or Lys, and Yaa may be Pro. Amino acid amides and methyl esters are also readily hydrolyzed, but rates on arylamides are exceedingly low.</text>
        <dbReference type="EC" id="3.4.11.1"/>
    </reaction>
</comment>
<comment type="catalytic activity">
    <reaction evidence="1">
        <text>Release of an N-terminal amino acid, preferentially leucine, but not glutamic or aspartic acids.</text>
        <dbReference type="EC" id="3.4.11.10"/>
    </reaction>
</comment>
<comment type="cofactor">
    <cofactor evidence="1">
        <name>Mn(2+)</name>
        <dbReference type="ChEBI" id="CHEBI:29035"/>
    </cofactor>
    <text evidence="1">Binds 2 manganese ions per subunit.</text>
</comment>
<comment type="subcellular location">
    <subcellularLocation>
        <location evidence="1">Cytoplasm</location>
    </subcellularLocation>
</comment>
<comment type="similarity">
    <text evidence="1">Belongs to the peptidase M17 family.</text>
</comment>
<proteinExistence type="inferred from homology"/>
<accession>A0RUA5</accession>
<dbReference type="EC" id="3.4.11.1" evidence="1"/>
<dbReference type="EC" id="3.4.11.10" evidence="1"/>
<dbReference type="EMBL" id="DP000238">
    <property type="protein sequence ID" value="ABK76922.1"/>
    <property type="molecule type" value="Genomic_DNA"/>
</dbReference>
<dbReference type="SMR" id="A0RUA5"/>
<dbReference type="STRING" id="414004.CENSYa_0283"/>
<dbReference type="EnsemblBacteria" id="ABK76922">
    <property type="protein sequence ID" value="ABK76922"/>
    <property type="gene ID" value="CENSYa_0283"/>
</dbReference>
<dbReference type="KEGG" id="csy:CENSYa_0283"/>
<dbReference type="PATRIC" id="fig|414004.10.peg.248"/>
<dbReference type="HOGENOM" id="CLU_013734_2_2_2"/>
<dbReference type="Proteomes" id="UP000000758">
    <property type="component" value="Chromosome"/>
</dbReference>
<dbReference type="GO" id="GO:0005737">
    <property type="term" value="C:cytoplasm"/>
    <property type="evidence" value="ECO:0007669"/>
    <property type="project" value="UniProtKB-SubCell"/>
</dbReference>
<dbReference type="GO" id="GO:0030145">
    <property type="term" value="F:manganese ion binding"/>
    <property type="evidence" value="ECO:0007669"/>
    <property type="project" value="UniProtKB-UniRule"/>
</dbReference>
<dbReference type="GO" id="GO:0070006">
    <property type="term" value="F:metalloaminopeptidase activity"/>
    <property type="evidence" value="ECO:0007669"/>
    <property type="project" value="InterPro"/>
</dbReference>
<dbReference type="GO" id="GO:0006508">
    <property type="term" value="P:proteolysis"/>
    <property type="evidence" value="ECO:0007669"/>
    <property type="project" value="UniProtKB-KW"/>
</dbReference>
<dbReference type="CDD" id="cd00433">
    <property type="entry name" value="Peptidase_M17"/>
    <property type="match status" value="1"/>
</dbReference>
<dbReference type="Gene3D" id="3.40.220.10">
    <property type="entry name" value="Leucine Aminopeptidase, subunit E, domain 1"/>
    <property type="match status" value="1"/>
</dbReference>
<dbReference type="Gene3D" id="3.40.630.10">
    <property type="entry name" value="Zn peptidases"/>
    <property type="match status" value="1"/>
</dbReference>
<dbReference type="HAMAP" id="MF_00181">
    <property type="entry name" value="Cytosol_peptidase_M17"/>
    <property type="match status" value="1"/>
</dbReference>
<dbReference type="InterPro" id="IPR011356">
    <property type="entry name" value="Leucine_aapep/pepB"/>
</dbReference>
<dbReference type="InterPro" id="IPR043472">
    <property type="entry name" value="Macro_dom-like"/>
</dbReference>
<dbReference type="InterPro" id="IPR000819">
    <property type="entry name" value="Peptidase_M17_C"/>
</dbReference>
<dbReference type="InterPro" id="IPR023042">
    <property type="entry name" value="Peptidase_M17_leu_NH2_pept"/>
</dbReference>
<dbReference type="InterPro" id="IPR008283">
    <property type="entry name" value="Peptidase_M17_N"/>
</dbReference>
<dbReference type="NCBIfam" id="NF002074">
    <property type="entry name" value="PRK00913.1-4"/>
    <property type="match status" value="1"/>
</dbReference>
<dbReference type="PANTHER" id="PTHR11963:SF23">
    <property type="entry name" value="CYTOSOL AMINOPEPTIDASE"/>
    <property type="match status" value="1"/>
</dbReference>
<dbReference type="PANTHER" id="PTHR11963">
    <property type="entry name" value="LEUCINE AMINOPEPTIDASE-RELATED"/>
    <property type="match status" value="1"/>
</dbReference>
<dbReference type="Pfam" id="PF00883">
    <property type="entry name" value="Peptidase_M17"/>
    <property type="match status" value="1"/>
</dbReference>
<dbReference type="Pfam" id="PF02789">
    <property type="entry name" value="Peptidase_M17_N"/>
    <property type="match status" value="1"/>
</dbReference>
<dbReference type="PRINTS" id="PR00481">
    <property type="entry name" value="LAMNOPPTDASE"/>
</dbReference>
<dbReference type="SUPFAM" id="SSF52949">
    <property type="entry name" value="Macro domain-like"/>
    <property type="match status" value="1"/>
</dbReference>
<dbReference type="SUPFAM" id="SSF53187">
    <property type="entry name" value="Zn-dependent exopeptidases"/>
    <property type="match status" value="1"/>
</dbReference>
<dbReference type="PROSITE" id="PS00631">
    <property type="entry name" value="CYTOSOL_AP"/>
    <property type="match status" value="1"/>
</dbReference>
<gene>
    <name evidence="1" type="primary">pepA</name>
    <name type="ordered locus">CENSYa_0283</name>
</gene>
<protein>
    <recommendedName>
        <fullName evidence="1">Probable cytosol aminopeptidase</fullName>
        <ecNumber evidence="1">3.4.11.1</ecNumber>
    </recommendedName>
    <alternativeName>
        <fullName evidence="1">Leucine aminopeptidase</fullName>
        <shortName evidence="1">LAP</shortName>
        <ecNumber evidence="1">3.4.11.10</ecNumber>
    </alternativeName>
    <alternativeName>
        <fullName evidence="1">Leucyl aminopeptidase</fullName>
    </alternativeName>
</protein>
<feature type="chain" id="PRO_1000098312" description="Probable cytosol aminopeptidase">
    <location>
        <begin position="1"/>
        <end position="488"/>
    </location>
</feature>
<feature type="active site" evidence="1">
    <location>
        <position position="263"/>
    </location>
</feature>
<feature type="active site" evidence="1">
    <location>
        <position position="337"/>
    </location>
</feature>
<feature type="binding site" evidence="1">
    <location>
        <position position="251"/>
    </location>
    <ligand>
        <name>Mn(2+)</name>
        <dbReference type="ChEBI" id="CHEBI:29035"/>
        <label>2</label>
    </ligand>
</feature>
<feature type="binding site" evidence="1">
    <location>
        <position position="256"/>
    </location>
    <ligand>
        <name>Mn(2+)</name>
        <dbReference type="ChEBI" id="CHEBI:29035"/>
        <label>1</label>
    </ligand>
</feature>
<feature type="binding site" evidence="1">
    <location>
        <position position="256"/>
    </location>
    <ligand>
        <name>Mn(2+)</name>
        <dbReference type="ChEBI" id="CHEBI:29035"/>
        <label>2</label>
    </ligand>
</feature>
<feature type="binding site" evidence="1">
    <location>
        <position position="274"/>
    </location>
    <ligand>
        <name>Mn(2+)</name>
        <dbReference type="ChEBI" id="CHEBI:29035"/>
        <label>2</label>
    </ligand>
</feature>
<feature type="binding site" evidence="1">
    <location>
        <position position="333"/>
    </location>
    <ligand>
        <name>Mn(2+)</name>
        <dbReference type="ChEBI" id="CHEBI:29035"/>
        <label>1</label>
    </ligand>
</feature>
<feature type="binding site" evidence="1">
    <location>
        <position position="335"/>
    </location>
    <ligand>
        <name>Mn(2+)</name>
        <dbReference type="ChEBI" id="CHEBI:29035"/>
        <label>1</label>
    </ligand>
</feature>
<feature type="binding site" evidence="1">
    <location>
        <position position="335"/>
    </location>
    <ligand>
        <name>Mn(2+)</name>
        <dbReference type="ChEBI" id="CHEBI:29035"/>
        <label>2</label>
    </ligand>
</feature>
<sequence length="488" mass="50571">MKITADASDPAKRKTAALCGFVLEGAAGAAGLGGPGLDDLIKEAIGKNGGKKGRISMTGTPGMPSERVILAGLGPAGKVTSDGIRSEAGRLARQVRDMGLADFAVAAPSILDPAEEAALIVEGAELALYSFDEFKAEKAGNSPRLHILGGGPSAARAIKDAQSITAGVAFARGLANMPPNECPPDKLGRAAVKMCTGKKMRCIVLKKPELKKGGFGGIIAVGQGSSNEPRLIIVEYNGGKKGQKPIVLVGKAVTFDTGGISIKPGEKMDEMKFDKCGGCTVLGIMKAVEDLALPVNVIGIVPSVENMPGGSSYRPGDIVKLYSGKTAEILNTDAEGRLILADALSYGEKKYAPSEIIDFATLTGACIVALGNNVAGMVSNDDAFAKRIEGASERTAEEVWRLPINDDYMSMIKSEVADMRNLGMGRAAGTITAAAFLKNAIGDTPWVHLDIAGTAWNQPATKKKPYNPGGATGFGVRLVAGYLKGRAQ</sequence>
<evidence type="ECO:0000255" key="1">
    <source>
        <dbReference type="HAMAP-Rule" id="MF_00181"/>
    </source>
</evidence>
<keyword id="KW-0031">Aminopeptidase</keyword>
<keyword id="KW-0963">Cytoplasm</keyword>
<keyword id="KW-0378">Hydrolase</keyword>
<keyword id="KW-0464">Manganese</keyword>
<keyword id="KW-0479">Metal-binding</keyword>
<keyword id="KW-0645">Protease</keyword>
<keyword id="KW-1185">Reference proteome</keyword>